<protein>
    <recommendedName>
        <fullName evidence="1">Enolase</fullName>
        <ecNumber evidence="1">4.2.1.11</ecNumber>
    </recommendedName>
    <alternativeName>
        <fullName evidence="1">2-phospho-D-glycerate hydro-lyase</fullName>
    </alternativeName>
    <alternativeName>
        <fullName evidence="1">2-phosphoglycerate dehydratase</fullName>
    </alternativeName>
</protein>
<dbReference type="EC" id="4.2.1.11" evidence="1"/>
<dbReference type="EMBL" id="CP000264">
    <property type="protein sequence ID" value="ABD54714.1"/>
    <property type="molecule type" value="Genomic_DNA"/>
</dbReference>
<dbReference type="RefSeq" id="WP_011454919.1">
    <property type="nucleotide sequence ID" value="NC_007802.1"/>
</dbReference>
<dbReference type="SMR" id="Q28RE8"/>
<dbReference type="STRING" id="290400.Jann_1797"/>
<dbReference type="KEGG" id="jan:Jann_1797"/>
<dbReference type="eggNOG" id="COG0148">
    <property type="taxonomic scope" value="Bacteria"/>
</dbReference>
<dbReference type="HOGENOM" id="CLU_031223_2_1_5"/>
<dbReference type="OrthoDB" id="9804716at2"/>
<dbReference type="UniPathway" id="UPA00109">
    <property type="reaction ID" value="UER00187"/>
</dbReference>
<dbReference type="Proteomes" id="UP000008326">
    <property type="component" value="Chromosome"/>
</dbReference>
<dbReference type="GO" id="GO:0009986">
    <property type="term" value="C:cell surface"/>
    <property type="evidence" value="ECO:0007669"/>
    <property type="project" value="UniProtKB-SubCell"/>
</dbReference>
<dbReference type="GO" id="GO:0005576">
    <property type="term" value="C:extracellular region"/>
    <property type="evidence" value="ECO:0007669"/>
    <property type="project" value="UniProtKB-SubCell"/>
</dbReference>
<dbReference type="GO" id="GO:0000015">
    <property type="term" value="C:phosphopyruvate hydratase complex"/>
    <property type="evidence" value="ECO:0007669"/>
    <property type="project" value="InterPro"/>
</dbReference>
<dbReference type="GO" id="GO:0000287">
    <property type="term" value="F:magnesium ion binding"/>
    <property type="evidence" value="ECO:0007669"/>
    <property type="project" value="UniProtKB-UniRule"/>
</dbReference>
<dbReference type="GO" id="GO:0004634">
    <property type="term" value="F:phosphopyruvate hydratase activity"/>
    <property type="evidence" value="ECO:0007669"/>
    <property type="project" value="UniProtKB-UniRule"/>
</dbReference>
<dbReference type="GO" id="GO:0006096">
    <property type="term" value="P:glycolytic process"/>
    <property type="evidence" value="ECO:0007669"/>
    <property type="project" value="UniProtKB-UniRule"/>
</dbReference>
<dbReference type="CDD" id="cd03313">
    <property type="entry name" value="enolase"/>
    <property type="match status" value="1"/>
</dbReference>
<dbReference type="FunFam" id="3.20.20.120:FF:000001">
    <property type="entry name" value="Enolase"/>
    <property type="match status" value="1"/>
</dbReference>
<dbReference type="FunFam" id="3.30.390.10:FF:000001">
    <property type="entry name" value="Enolase"/>
    <property type="match status" value="1"/>
</dbReference>
<dbReference type="Gene3D" id="3.20.20.120">
    <property type="entry name" value="Enolase-like C-terminal domain"/>
    <property type="match status" value="1"/>
</dbReference>
<dbReference type="Gene3D" id="3.30.390.10">
    <property type="entry name" value="Enolase-like, N-terminal domain"/>
    <property type="match status" value="1"/>
</dbReference>
<dbReference type="HAMAP" id="MF_00318">
    <property type="entry name" value="Enolase"/>
    <property type="match status" value="1"/>
</dbReference>
<dbReference type="InterPro" id="IPR000941">
    <property type="entry name" value="Enolase"/>
</dbReference>
<dbReference type="InterPro" id="IPR036849">
    <property type="entry name" value="Enolase-like_C_sf"/>
</dbReference>
<dbReference type="InterPro" id="IPR029017">
    <property type="entry name" value="Enolase-like_N"/>
</dbReference>
<dbReference type="InterPro" id="IPR020810">
    <property type="entry name" value="Enolase_C"/>
</dbReference>
<dbReference type="InterPro" id="IPR020809">
    <property type="entry name" value="Enolase_CS"/>
</dbReference>
<dbReference type="InterPro" id="IPR020811">
    <property type="entry name" value="Enolase_N"/>
</dbReference>
<dbReference type="NCBIfam" id="TIGR01060">
    <property type="entry name" value="eno"/>
    <property type="match status" value="1"/>
</dbReference>
<dbReference type="PANTHER" id="PTHR11902">
    <property type="entry name" value="ENOLASE"/>
    <property type="match status" value="1"/>
</dbReference>
<dbReference type="PANTHER" id="PTHR11902:SF1">
    <property type="entry name" value="ENOLASE"/>
    <property type="match status" value="1"/>
</dbReference>
<dbReference type="Pfam" id="PF00113">
    <property type="entry name" value="Enolase_C"/>
    <property type="match status" value="1"/>
</dbReference>
<dbReference type="Pfam" id="PF03952">
    <property type="entry name" value="Enolase_N"/>
    <property type="match status" value="1"/>
</dbReference>
<dbReference type="PIRSF" id="PIRSF001400">
    <property type="entry name" value="Enolase"/>
    <property type="match status" value="1"/>
</dbReference>
<dbReference type="PRINTS" id="PR00148">
    <property type="entry name" value="ENOLASE"/>
</dbReference>
<dbReference type="SFLD" id="SFLDS00001">
    <property type="entry name" value="Enolase"/>
    <property type="match status" value="1"/>
</dbReference>
<dbReference type="SFLD" id="SFLDF00002">
    <property type="entry name" value="enolase"/>
    <property type="match status" value="1"/>
</dbReference>
<dbReference type="SMART" id="SM01192">
    <property type="entry name" value="Enolase_C"/>
    <property type="match status" value="1"/>
</dbReference>
<dbReference type="SMART" id="SM01193">
    <property type="entry name" value="Enolase_N"/>
    <property type="match status" value="1"/>
</dbReference>
<dbReference type="SUPFAM" id="SSF51604">
    <property type="entry name" value="Enolase C-terminal domain-like"/>
    <property type="match status" value="1"/>
</dbReference>
<dbReference type="SUPFAM" id="SSF54826">
    <property type="entry name" value="Enolase N-terminal domain-like"/>
    <property type="match status" value="1"/>
</dbReference>
<dbReference type="PROSITE" id="PS00164">
    <property type="entry name" value="ENOLASE"/>
    <property type="match status" value="1"/>
</dbReference>
<keyword id="KW-0963">Cytoplasm</keyword>
<keyword id="KW-0324">Glycolysis</keyword>
<keyword id="KW-0456">Lyase</keyword>
<keyword id="KW-0460">Magnesium</keyword>
<keyword id="KW-0479">Metal-binding</keyword>
<keyword id="KW-1185">Reference proteome</keyword>
<keyword id="KW-0964">Secreted</keyword>
<sequence>MSVIIDIHAREILDSRGNPTVEVDVTLEDGTMGRAAVPSGASTGAYEAVEKRDGDKARYKGKGVLAAVEAVNGEIADTLVGFDATEQVAIDQTMCELDGTDNKGRLGANAILGVSLATAKAAADFTAQPLYRYVGGTMAHVLPVPMMNIINGGEHADNPIDIQEFMIMPVSATSIAEAVRMGSEVFHTLKSELSAAGLSTGIGDEGGFAPNLSSTRDALDFVLKSIEKAGYAPGDDMVLALDCAATEYYRDGKYELSGEGKSLTSDENVAYLAALVANYPIFSIEDGMGEDDWDGWIALTEALGDKVQLVGDDLFVTNPARLKDGIDRKAANSLLVKVNQIGTLTETLAAVNMATRAGFTSVMSHRSGETEDATIADLAVATNCGQIKTGSLARSDRLAKYNQLIRIEEQLEETANFAGRSILRG</sequence>
<proteinExistence type="inferred from homology"/>
<comment type="function">
    <text evidence="1">Catalyzes the reversible conversion of 2-phosphoglycerate (2-PG) into phosphoenolpyruvate (PEP). It is essential for the degradation of carbohydrates via glycolysis.</text>
</comment>
<comment type="catalytic activity">
    <reaction evidence="1">
        <text>(2R)-2-phosphoglycerate = phosphoenolpyruvate + H2O</text>
        <dbReference type="Rhea" id="RHEA:10164"/>
        <dbReference type="ChEBI" id="CHEBI:15377"/>
        <dbReference type="ChEBI" id="CHEBI:58289"/>
        <dbReference type="ChEBI" id="CHEBI:58702"/>
        <dbReference type="EC" id="4.2.1.11"/>
    </reaction>
</comment>
<comment type="cofactor">
    <cofactor evidence="1">
        <name>Mg(2+)</name>
        <dbReference type="ChEBI" id="CHEBI:18420"/>
    </cofactor>
    <text evidence="1">Binds a second Mg(2+) ion via substrate during catalysis.</text>
</comment>
<comment type="pathway">
    <text evidence="1">Carbohydrate degradation; glycolysis; pyruvate from D-glyceraldehyde 3-phosphate: step 4/5.</text>
</comment>
<comment type="subcellular location">
    <subcellularLocation>
        <location evidence="1">Cytoplasm</location>
    </subcellularLocation>
    <subcellularLocation>
        <location evidence="1">Secreted</location>
    </subcellularLocation>
    <subcellularLocation>
        <location evidence="1">Cell surface</location>
    </subcellularLocation>
    <text evidence="1">Fractions of enolase are present in both the cytoplasm and on the cell surface.</text>
</comment>
<comment type="similarity">
    <text evidence="1">Belongs to the enolase family.</text>
</comment>
<feature type="chain" id="PRO_0000267046" description="Enolase">
    <location>
        <begin position="1"/>
        <end position="425"/>
    </location>
</feature>
<feature type="active site" description="Proton donor" evidence="1">
    <location>
        <position position="205"/>
    </location>
</feature>
<feature type="active site" description="Proton acceptor" evidence="1">
    <location>
        <position position="337"/>
    </location>
</feature>
<feature type="binding site" evidence="1">
    <location>
        <position position="163"/>
    </location>
    <ligand>
        <name>(2R)-2-phosphoglycerate</name>
        <dbReference type="ChEBI" id="CHEBI:58289"/>
    </ligand>
</feature>
<feature type="binding site" evidence="1">
    <location>
        <position position="242"/>
    </location>
    <ligand>
        <name>Mg(2+)</name>
        <dbReference type="ChEBI" id="CHEBI:18420"/>
    </ligand>
</feature>
<feature type="binding site" evidence="1">
    <location>
        <position position="285"/>
    </location>
    <ligand>
        <name>Mg(2+)</name>
        <dbReference type="ChEBI" id="CHEBI:18420"/>
    </ligand>
</feature>
<feature type="binding site" evidence="1">
    <location>
        <position position="312"/>
    </location>
    <ligand>
        <name>Mg(2+)</name>
        <dbReference type="ChEBI" id="CHEBI:18420"/>
    </ligand>
</feature>
<feature type="binding site" evidence="1">
    <location>
        <position position="337"/>
    </location>
    <ligand>
        <name>(2R)-2-phosphoglycerate</name>
        <dbReference type="ChEBI" id="CHEBI:58289"/>
    </ligand>
</feature>
<feature type="binding site" evidence="1">
    <location>
        <position position="366"/>
    </location>
    <ligand>
        <name>(2R)-2-phosphoglycerate</name>
        <dbReference type="ChEBI" id="CHEBI:58289"/>
    </ligand>
</feature>
<feature type="binding site" evidence="1">
    <location>
        <position position="367"/>
    </location>
    <ligand>
        <name>(2R)-2-phosphoglycerate</name>
        <dbReference type="ChEBI" id="CHEBI:58289"/>
    </ligand>
</feature>
<feature type="binding site" evidence="1">
    <location>
        <position position="388"/>
    </location>
    <ligand>
        <name>(2R)-2-phosphoglycerate</name>
        <dbReference type="ChEBI" id="CHEBI:58289"/>
    </ligand>
</feature>
<organism>
    <name type="scientific">Jannaschia sp. (strain CCS1)</name>
    <dbReference type="NCBI Taxonomy" id="290400"/>
    <lineage>
        <taxon>Bacteria</taxon>
        <taxon>Pseudomonadati</taxon>
        <taxon>Pseudomonadota</taxon>
        <taxon>Alphaproteobacteria</taxon>
        <taxon>Rhodobacterales</taxon>
        <taxon>Roseobacteraceae</taxon>
        <taxon>Jannaschia</taxon>
    </lineage>
</organism>
<evidence type="ECO:0000255" key="1">
    <source>
        <dbReference type="HAMAP-Rule" id="MF_00318"/>
    </source>
</evidence>
<gene>
    <name evidence="1" type="primary">eno</name>
    <name type="ordered locus">Jann_1797</name>
</gene>
<name>ENO_JANSC</name>
<reference key="1">
    <citation type="submission" date="2006-02" db="EMBL/GenBank/DDBJ databases">
        <title>Complete sequence of chromosome of Jannaschia sp. CCS1.</title>
        <authorList>
            <consortium name="US DOE Joint Genome Institute"/>
            <person name="Copeland A."/>
            <person name="Lucas S."/>
            <person name="Lapidus A."/>
            <person name="Barry K."/>
            <person name="Detter J.C."/>
            <person name="Glavina del Rio T."/>
            <person name="Hammon N."/>
            <person name="Israni S."/>
            <person name="Pitluck S."/>
            <person name="Brettin T."/>
            <person name="Bruce D."/>
            <person name="Han C."/>
            <person name="Tapia R."/>
            <person name="Gilna P."/>
            <person name="Chertkov O."/>
            <person name="Saunders E."/>
            <person name="Schmutz J."/>
            <person name="Larimer F."/>
            <person name="Land M."/>
            <person name="Kyrpides N."/>
            <person name="Lykidis A."/>
            <person name="Moran M.A."/>
            <person name="Belas R."/>
            <person name="Ye W."/>
            <person name="Buchan A."/>
            <person name="Gonzalez J.M."/>
            <person name="Schell M.A."/>
            <person name="Richardson P."/>
        </authorList>
    </citation>
    <scope>NUCLEOTIDE SEQUENCE [LARGE SCALE GENOMIC DNA]</scope>
    <source>
        <strain>CCS1</strain>
    </source>
</reference>
<accession>Q28RE8</accession>